<dbReference type="EMBL" id="CP001120">
    <property type="protein sequence ID" value="ACF67825.1"/>
    <property type="molecule type" value="Genomic_DNA"/>
</dbReference>
<dbReference type="RefSeq" id="WP_000387374.1">
    <property type="nucleotide sequence ID" value="NC_011083.1"/>
</dbReference>
<dbReference type="SMR" id="B4TIS9"/>
<dbReference type="KEGG" id="seh:SeHA_C1840"/>
<dbReference type="HOGENOM" id="CLU_007127_2_0_6"/>
<dbReference type="Proteomes" id="UP000001866">
    <property type="component" value="Chromosome"/>
</dbReference>
<dbReference type="GO" id="GO:0005886">
    <property type="term" value="C:plasma membrane"/>
    <property type="evidence" value="ECO:0007669"/>
    <property type="project" value="UniProtKB-SubCell"/>
</dbReference>
<dbReference type="GO" id="GO:0050897">
    <property type="term" value="F:cobalt ion binding"/>
    <property type="evidence" value="ECO:0007669"/>
    <property type="project" value="TreeGrafter"/>
</dbReference>
<dbReference type="GO" id="GO:0015087">
    <property type="term" value="F:cobalt ion transmembrane transporter activity"/>
    <property type="evidence" value="ECO:0007669"/>
    <property type="project" value="TreeGrafter"/>
</dbReference>
<dbReference type="GO" id="GO:0000287">
    <property type="term" value="F:magnesium ion binding"/>
    <property type="evidence" value="ECO:0007669"/>
    <property type="project" value="TreeGrafter"/>
</dbReference>
<dbReference type="GO" id="GO:0015095">
    <property type="term" value="F:magnesium ion transmembrane transporter activity"/>
    <property type="evidence" value="ECO:0007669"/>
    <property type="project" value="TreeGrafter"/>
</dbReference>
<dbReference type="GO" id="GO:0005385">
    <property type="term" value="F:zinc ion transmembrane transporter activity"/>
    <property type="evidence" value="ECO:0007669"/>
    <property type="project" value="UniProtKB-UniRule"/>
</dbReference>
<dbReference type="CDD" id="cd12833">
    <property type="entry name" value="ZntB-like_1"/>
    <property type="match status" value="1"/>
</dbReference>
<dbReference type="FunFam" id="1.20.58.340:FF:000002">
    <property type="entry name" value="Zinc transport protein ZntB"/>
    <property type="match status" value="1"/>
</dbReference>
<dbReference type="FunFam" id="3.30.460.20:FF:000001">
    <property type="entry name" value="Zinc transport protein ZntB"/>
    <property type="match status" value="1"/>
</dbReference>
<dbReference type="Gene3D" id="3.30.460.20">
    <property type="entry name" value="CorA soluble domain-like"/>
    <property type="match status" value="1"/>
</dbReference>
<dbReference type="Gene3D" id="1.20.58.340">
    <property type="entry name" value="Magnesium transport protein CorA, transmembrane region"/>
    <property type="match status" value="2"/>
</dbReference>
<dbReference type="HAMAP" id="MF_01565">
    <property type="entry name" value="ZntB"/>
    <property type="match status" value="1"/>
</dbReference>
<dbReference type="InterPro" id="IPR045861">
    <property type="entry name" value="CorA_cytoplasmic_dom"/>
</dbReference>
<dbReference type="InterPro" id="IPR045863">
    <property type="entry name" value="CorA_TM1_TM2"/>
</dbReference>
<dbReference type="InterPro" id="IPR002523">
    <property type="entry name" value="MgTranspt_CorA/ZnTranspt_ZntB"/>
</dbReference>
<dbReference type="InterPro" id="IPR023714">
    <property type="entry name" value="Zn_transp_ZntB"/>
</dbReference>
<dbReference type="NCBIfam" id="NF007092">
    <property type="entry name" value="PRK09546.1"/>
    <property type="match status" value="1"/>
</dbReference>
<dbReference type="PANTHER" id="PTHR46494">
    <property type="entry name" value="CORA FAMILY METAL ION TRANSPORTER (EUROFUNG)"/>
    <property type="match status" value="1"/>
</dbReference>
<dbReference type="PANTHER" id="PTHR46494:SF3">
    <property type="entry name" value="ZINC TRANSPORT PROTEIN ZNTB"/>
    <property type="match status" value="1"/>
</dbReference>
<dbReference type="Pfam" id="PF01544">
    <property type="entry name" value="CorA"/>
    <property type="match status" value="1"/>
</dbReference>
<dbReference type="SUPFAM" id="SSF143865">
    <property type="entry name" value="CorA soluble domain-like"/>
    <property type="match status" value="1"/>
</dbReference>
<dbReference type="SUPFAM" id="SSF144083">
    <property type="entry name" value="Magnesium transport protein CorA, transmembrane region"/>
    <property type="match status" value="1"/>
</dbReference>
<comment type="function">
    <text evidence="1">Zinc transporter. Acts as a Zn(2+):proton symporter, which likely mediates zinc ion uptake.</text>
</comment>
<comment type="catalytic activity">
    <reaction evidence="1">
        <text>Zn(2+)(out) + H(+)(out) = Zn(2+)(in) + H(+)(in)</text>
        <dbReference type="Rhea" id="RHEA:71195"/>
        <dbReference type="ChEBI" id="CHEBI:15378"/>
        <dbReference type="ChEBI" id="CHEBI:29105"/>
    </reaction>
    <physiologicalReaction direction="left-to-right" evidence="1">
        <dbReference type="Rhea" id="RHEA:71196"/>
    </physiologicalReaction>
</comment>
<comment type="subcellular location">
    <subcellularLocation>
        <location evidence="1">Cell inner membrane</location>
        <topology evidence="1">Multi-pass membrane protein</topology>
    </subcellularLocation>
</comment>
<comment type="similarity">
    <text evidence="1">Belongs to the CorA metal ion transporter (MIT) (TC 1.A.35) family.</text>
</comment>
<gene>
    <name evidence="1" type="primary">zntB</name>
    <name type="ordered locus">SeHA_C1840</name>
</gene>
<feature type="chain" id="PRO_1000189727" description="Zinc transport protein ZntB">
    <location>
        <begin position="1"/>
        <end position="327"/>
    </location>
</feature>
<feature type="topological domain" description="Cytoplasmic" evidence="1">
    <location>
        <begin position="1"/>
        <end position="273"/>
    </location>
</feature>
<feature type="transmembrane region" description="Helical" evidence="1">
    <location>
        <begin position="274"/>
        <end position="294"/>
    </location>
</feature>
<feature type="topological domain" description="Periplasmic" evidence="1">
    <location>
        <begin position="295"/>
        <end position="300"/>
    </location>
</feature>
<feature type="transmembrane region" description="Helical" evidence="1">
    <location>
        <begin position="301"/>
        <end position="321"/>
    </location>
</feature>
<feature type="topological domain" description="Cytoplasmic" evidence="1">
    <location>
        <begin position="322"/>
        <end position="327"/>
    </location>
</feature>
<accession>B4TIS9</accession>
<proteinExistence type="inferred from homology"/>
<protein>
    <recommendedName>
        <fullName evidence="1">Zinc transport protein ZntB</fullName>
    </recommendedName>
</protein>
<organism>
    <name type="scientific">Salmonella heidelberg (strain SL476)</name>
    <dbReference type="NCBI Taxonomy" id="454169"/>
    <lineage>
        <taxon>Bacteria</taxon>
        <taxon>Pseudomonadati</taxon>
        <taxon>Pseudomonadota</taxon>
        <taxon>Gammaproteobacteria</taxon>
        <taxon>Enterobacterales</taxon>
        <taxon>Enterobacteriaceae</taxon>
        <taxon>Salmonella</taxon>
    </lineage>
</organism>
<reference key="1">
    <citation type="journal article" date="2011" name="J. Bacteriol.">
        <title>Comparative genomics of 28 Salmonella enterica isolates: evidence for CRISPR-mediated adaptive sublineage evolution.</title>
        <authorList>
            <person name="Fricke W.F."/>
            <person name="Mammel M.K."/>
            <person name="McDermott P.F."/>
            <person name="Tartera C."/>
            <person name="White D.G."/>
            <person name="Leclerc J.E."/>
            <person name="Ravel J."/>
            <person name="Cebula T.A."/>
        </authorList>
    </citation>
    <scope>NUCLEOTIDE SEQUENCE [LARGE SCALE GENOMIC DNA]</scope>
    <source>
        <strain>SL476</strain>
    </source>
</reference>
<sequence length="327" mass="36789">MEAIKGSDVNVPDAVFAWLLDGRGGVKPLEDNDVIDSQHPCWLHLNYTHPDSARWLASTPLLPNNVRDALAGESSRPRVSRMGEGTLITLRCINGSTDERPDQLVAMRLYMDERFIVSTRQRKVLALDDVVSDLQEGTGPVDCGSWLVDVCDALTDHASEFIEELHDKIIDLEDNLLDQQIPPRGFLALLRKQLIVMRRYMAPQRDVYARLASERLPWMSDDHRRRMQDIADRLGRGLDEIDACIARTGIMADEIAQVMQESLARRTYTMSLMAMVFLPSTFLTGLFGVNLGGIPGGGWRFGFSLFCILLVVLIGGVTLWLHRSKWL</sequence>
<keyword id="KW-0997">Cell inner membrane</keyword>
<keyword id="KW-1003">Cell membrane</keyword>
<keyword id="KW-0406">Ion transport</keyword>
<keyword id="KW-0472">Membrane</keyword>
<keyword id="KW-0812">Transmembrane</keyword>
<keyword id="KW-1133">Transmembrane helix</keyword>
<keyword id="KW-0813">Transport</keyword>
<keyword id="KW-0862">Zinc</keyword>
<name>ZNTB_SALHS</name>
<evidence type="ECO:0000255" key="1">
    <source>
        <dbReference type="HAMAP-Rule" id="MF_01565"/>
    </source>
</evidence>